<proteinExistence type="inferred from homology"/>
<sequence length="58" mass="6088">MLGWTLMFLVVAIIAGLFGFTGIAGAAAGIAKIIFFLFIVLLVISLLVNAIKGRAPRP</sequence>
<reference key="1">
    <citation type="submission" date="2006-12" db="EMBL/GenBank/DDBJ databases">
        <title>Complete sequence of Shewanella sp. W3-18-1.</title>
        <authorList>
            <consortium name="US DOE Joint Genome Institute"/>
            <person name="Copeland A."/>
            <person name="Lucas S."/>
            <person name="Lapidus A."/>
            <person name="Barry K."/>
            <person name="Detter J.C."/>
            <person name="Glavina del Rio T."/>
            <person name="Hammon N."/>
            <person name="Israni S."/>
            <person name="Dalin E."/>
            <person name="Tice H."/>
            <person name="Pitluck S."/>
            <person name="Chain P."/>
            <person name="Malfatti S."/>
            <person name="Shin M."/>
            <person name="Vergez L."/>
            <person name="Schmutz J."/>
            <person name="Larimer F."/>
            <person name="Land M."/>
            <person name="Hauser L."/>
            <person name="Kyrpides N."/>
            <person name="Lykidis A."/>
            <person name="Tiedje J."/>
            <person name="Richardson P."/>
        </authorList>
    </citation>
    <scope>NUCLEOTIDE SEQUENCE [LARGE SCALE GENOMIC DNA]</scope>
    <source>
        <strain>W3-18-1</strain>
    </source>
</reference>
<protein>
    <recommendedName>
        <fullName evidence="1">UPF0391 membrane protein Sputw3181_2781</fullName>
    </recommendedName>
</protein>
<organism>
    <name type="scientific">Shewanella sp. (strain W3-18-1)</name>
    <dbReference type="NCBI Taxonomy" id="351745"/>
    <lineage>
        <taxon>Bacteria</taxon>
        <taxon>Pseudomonadati</taxon>
        <taxon>Pseudomonadota</taxon>
        <taxon>Gammaproteobacteria</taxon>
        <taxon>Alteromonadales</taxon>
        <taxon>Shewanellaceae</taxon>
        <taxon>Shewanella</taxon>
    </lineage>
</organism>
<feature type="chain" id="PRO_5000204151" description="UPF0391 membrane protein Sputw3181_2781">
    <location>
        <begin position="1"/>
        <end position="58"/>
    </location>
</feature>
<feature type="transmembrane region" description="Helical" evidence="1">
    <location>
        <begin position="6"/>
        <end position="26"/>
    </location>
</feature>
<feature type="transmembrane region" description="Helical" evidence="1">
    <location>
        <begin position="28"/>
        <end position="48"/>
    </location>
</feature>
<comment type="subcellular location">
    <subcellularLocation>
        <location evidence="1">Cell membrane</location>
        <topology evidence="1">Multi-pass membrane protein</topology>
    </subcellularLocation>
</comment>
<comment type="similarity">
    <text evidence="1">Belongs to the UPF0391 family.</text>
</comment>
<evidence type="ECO:0000255" key="1">
    <source>
        <dbReference type="HAMAP-Rule" id="MF_01361"/>
    </source>
</evidence>
<accession>A1RLQ3</accession>
<name>Y2781_SHESW</name>
<dbReference type="EMBL" id="CP000503">
    <property type="protein sequence ID" value="ABM25598.1"/>
    <property type="molecule type" value="Genomic_DNA"/>
</dbReference>
<dbReference type="KEGG" id="shw:Sputw3181_2781"/>
<dbReference type="HOGENOM" id="CLU_187346_1_0_6"/>
<dbReference type="Proteomes" id="UP000002597">
    <property type="component" value="Chromosome"/>
</dbReference>
<dbReference type="GO" id="GO:0005886">
    <property type="term" value="C:plasma membrane"/>
    <property type="evidence" value="ECO:0007669"/>
    <property type="project" value="UniProtKB-SubCell"/>
</dbReference>
<dbReference type="HAMAP" id="MF_01361">
    <property type="entry name" value="UPF0391"/>
    <property type="match status" value="1"/>
</dbReference>
<dbReference type="InterPro" id="IPR009760">
    <property type="entry name" value="DUF1328"/>
</dbReference>
<dbReference type="NCBIfam" id="NF010228">
    <property type="entry name" value="PRK13682.1-3"/>
    <property type="match status" value="1"/>
</dbReference>
<dbReference type="NCBIfam" id="NF010229">
    <property type="entry name" value="PRK13682.1-4"/>
    <property type="match status" value="1"/>
</dbReference>
<dbReference type="Pfam" id="PF07043">
    <property type="entry name" value="DUF1328"/>
    <property type="match status" value="1"/>
</dbReference>
<dbReference type="PIRSF" id="PIRSF036466">
    <property type="entry name" value="UCP036466"/>
    <property type="match status" value="1"/>
</dbReference>
<keyword id="KW-1003">Cell membrane</keyword>
<keyword id="KW-0472">Membrane</keyword>
<keyword id="KW-0812">Transmembrane</keyword>
<keyword id="KW-1133">Transmembrane helix</keyword>
<gene>
    <name type="ordered locus">Sputw3181_2781</name>
</gene>